<sequence length="520" mass="57907">MENIEKLLMQEKILMLELDLVRAKISLARANGSSQQGDLPLHRETPVKEEAVHSALATFTPTQVKAIPEQTAPGKESTNPLMASILPKDMNPVQTGIRLAVPGDFLRPHQGIPIPQKSELSSIVAPLRAESGIHHPHINYYVVYNGPHAGIYDDWGCTKAATNGVPGVAYKKFATITEARAAADAYTTSQQTDRLNFIPKGEAQLKPKSFAKALTSPPKQKAHWLTLGTKRPSSDPAPKEISFAPEITMDDFLYLYDLGRKFDGEGDDTMFTTDNEKISLFNFRKNADPQMVREAYAAGLIKTIYPSNNLQEIKYLPKKVKDAVKRFRTNCIKNTEKDIFLKIRSTIPVWTIQGLLHKPRQVIEIGVSKKVVPTESKAMESKIQIEDLTELAVKTGEQFIQSLLRLNDKKKIFVNMVEHDTLVYSKNIKDTVSEDQRAIETFQQRVISGNLLGFHCPAICHFIKRTVEKEGGTYKCHHCDKGKAIVQDASADSGPKDGPPPTRSIVEKEDVPTTSSKQVD</sequence>
<proteinExistence type="inferred from homology"/>
<evidence type="ECO:0000256" key="1">
    <source>
        <dbReference type="SAM" id="MobiDB-lite"/>
    </source>
</evidence>
<evidence type="ECO:0000269" key="2">
    <source>
    </source>
</evidence>
<evidence type="ECO:0000305" key="3"/>
<reference key="1">
    <citation type="journal article" date="1981" name="Nucleic Acids Res.">
        <title>The complete nucleotide sequence of an infectious clone of cauliflower mosaic virus by M13mp7 shotgun sequencing.</title>
        <authorList>
            <person name="Gardner R.C."/>
            <person name="Howarth A.J."/>
            <person name="Hahn P."/>
            <person name="Brown-Luedi M."/>
            <person name="Shepherd R.J."/>
            <person name="Messing J."/>
        </authorList>
    </citation>
    <scope>NUCLEOTIDE SEQUENCE [GENOMIC DNA]</scope>
</reference>
<reference key="2">
    <citation type="journal article" date="2001" name="Cell">
        <title>A plant viral 'reinitiation' factor interacts with the host translational machinery.</title>
        <authorList>
            <person name="Park H.S."/>
            <person name="Himmelbach A."/>
            <person name="Browning K.S."/>
            <person name="Hohn T."/>
            <person name="Ryabova L.A."/>
        </authorList>
    </citation>
    <scope>FUNCTION</scope>
</reference>
<keyword id="KW-1035">Host cytoplasm</keyword>
<keyword id="KW-0810">Translation regulation</keyword>
<feature type="chain" id="PRO_0000222039" description="Transactivator/viroplasmin protein">
    <location>
        <begin position="1"/>
        <end position="520"/>
    </location>
</feature>
<feature type="region of interest" description="Disordered" evidence="1">
    <location>
        <begin position="487"/>
        <end position="520"/>
    </location>
</feature>
<comment type="function">
    <text evidence="2">Enhances the ribosomal termination-reinitiation event leading to the translation of major open reading frames on the polycistronic viral RNAs.</text>
</comment>
<comment type="subcellular location">
    <subcellularLocation>
        <location>Host cytoplasm</location>
    </subcellularLocation>
    <text>Found in cytoplasmic occlusion bodies.</text>
</comment>
<comment type="miscellaneous">
    <text>The inclusion bodies are the site of viral DNA synthesis, virion assembly and accumulation in the infected cell.</text>
</comment>
<comment type="similarity">
    <text evidence="3">Belongs to the caulimoviridae viroplasmin family.</text>
</comment>
<organism>
    <name type="scientific">Cauliflower mosaic virus (strain CM-1841)</name>
    <name type="common">CaMV</name>
    <dbReference type="NCBI Taxonomy" id="10644"/>
    <lineage>
        <taxon>Viruses</taxon>
        <taxon>Riboviria</taxon>
        <taxon>Pararnavirae</taxon>
        <taxon>Artverviricota</taxon>
        <taxon>Revtraviricetes</taxon>
        <taxon>Ortervirales</taxon>
        <taxon>Caulimoviridae</taxon>
        <taxon>Caulimovirus</taxon>
        <taxon>Caulimovirus tessellobrassicae</taxon>
    </lineage>
</organism>
<protein>
    <recommendedName>
        <fullName>Transactivator/viroplasmin protein</fullName>
        <shortName>Tav</shortName>
    </recommendedName>
    <alternativeName>
        <fullName>Inclusion body matrix protein</fullName>
    </alternativeName>
</protein>
<accession>P03558</accession>
<gene>
    <name type="ORF">ORF VI</name>
</gene>
<organismHost>
    <name type="scientific">Arabidopsis thaliana</name>
    <name type="common">Mouse-ear cress</name>
    <dbReference type="NCBI Taxonomy" id="3702"/>
</organismHost>
<organismHost>
    <name type="scientific">Brassica</name>
    <dbReference type="NCBI Taxonomy" id="3705"/>
</organismHost>
<organismHost>
    <name type="scientific">Raphanus</name>
    <dbReference type="NCBI Taxonomy" id="3725"/>
</organismHost>
<name>IBMP_CAMVC</name>
<dbReference type="EMBL" id="V00140">
    <property type="status" value="NOT_ANNOTATED_CDS"/>
    <property type="molecule type" value="Genomic_DNA"/>
</dbReference>
<dbReference type="PIR" id="A04161">
    <property type="entry name" value="QQCV6C"/>
</dbReference>
<dbReference type="SMR" id="P03558"/>
<dbReference type="Proteomes" id="UP000008438">
    <property type="component" value="Genome"/>
</dbReference>
<dbReference type="GO" id="GO:0030430">
    <property type="term" value="C:host cell cytoplasm"/>
    <property type="evidence" value="ECO:0007669"/>
    <property type="project" value="UniProtKB-SubCell"/>
</dbReference>
<dbReference type="GO" id="GO:0006417">
    <property type="term" value="P:regulation of translation"/>
    <property type="evidence" value="ECO:0007669"/>
    <property type="project" value="UniProtKB-KW"/>
</dbReference>
<dbReference type="GO" id="GO:0075525">
    <property type="term" value="P:viral translational termination-reinitiation"/>
    <property type="evidence" value="ECO:0000314"/>
    <property type="project" value="UniProtKB"/>
</dbReference>
<dbReference type="FunFam" id="3.40.970.10:FF:000003">
    <property type="entry name" value="Transactivator/viroplasmin protein"/>
    <property type="match status" value="1"/>
</dbReference>
<dbReference type="Gene3D" id="3.40.970.10">
    <property type="entry name" value="Ribonuclease H1, N-terminal domain"/>
    <property type="match status" value="1"/>
</dbReference>
<dbReference type="InterPro" id="IPR009027">
    <property type="entry name" value="Ribosomal_bL9/RNase_H1_N"/>
</dbReference>
<dbReference type="InterPro" id="IPR011320">
    <property type="entry name" value="RNase_H1_N"/>
</dbReference>
<dbReference type="InterPro" id="IPR037056">
    <property type="entry name" value="RNase_H1_N_sf"/>
</dbReference>
<dbReference type="Pfam" id="PF01693">
    <property type="entry name" value="Cauli_VI"/>
    <property type="match status" value="1"/>
</dbReference>
<dbReference type="SUPFAM" id="SSF55658">
    <property type="entry name" value="L9 N-domain-like"/>
    <property type="match status" value="1"/>
</dbReference>